<evidence type="ECO:0000255" key="1">
    <source>
        <dbReference type="HAMAP-Rule" id="MF_00362"/>
    </source>
</evidence>
<evidence type="ECO:0000305" key="2"/>
<gene>
    <name evidence="1" type="primary">rplJ</name>
    <name type="ordered locus">Teth514_0857</name>
</gene>
<protein>
    <recommendedName>
        <fullName evidence="1">Large ribosomal subunit protein uL10</fullName>
    </recommendedName>
    <alternativeName>
        <fullName evidence="2">50S ribosomal protein L10</fullName>
    </alternativeName>
</protein>
<keyword id="KW-0687">Ribonucleoprotein</keyword>
<keyword id="KW-0689">Ribosomal protein</keyword>
<keyword id="KW-0694">RNA-binding</keyword>
<keyword id="KW-0699">rRNA-binding</keyword>
<comment type="function">
    <text evidence="1">Forms part of the ribosomal stalk, playing a central role in the interaction of the ribosome with GTP-bound translation factors.</text>
</comment>
<comment type="subunit">
    <text evidence="1">Part of the ribosomal stalk of the 50S ribosomal subunit. The N-terminus interacts with L11 and the large rRNA to form the base of the stalk. The C-terminus forms an elongated spine to which L12 dimers bind in a sequential fashion forming a multimeric L10(L12)X complex.</text>
</comment>
<comment type="similarity">
    <text evidence="1">Belongs to the universal ribosomal protein uL10 family.</text>
</comment>
<accession>B0K5G6</accession>
<sequence length="177" mass="19563">MGTAKEKKQQIVAEFKDKLSRAQTVIFSNFSGLTVEDDTILRRKFREANSEYKVYKNTLMTIAAKELGYGDDLIKYFEGPTSVAFGYDDPVAPAKVLVEFMKDHKGIELKAGLVNGKLVTVEEIKALAELPSREELVAKALGSMKAPITNLVFVLSGTLRSLLYALNAVKEKKQAEA</sequence>
<reference key="1">
    <citation type="submission" date="2008-01" db="EMBL/GenBank/DDBJ databases">
        <title>Complete sequence of Thermoanaerobacter sp. X514.</title>
        <authorList>
            <consortium name="US DOE Joint Genome Institute"/>
            <person name="Copeland A."/>
            <person name="Lucas S."/>
            <person name="Lapidus A."/>
            <person name="Barry K."/>
            <person name="Glavina del Rio T."/>
            <person name="Dalin E."/>
            <person name="Tice H."/>
            <person name="Pitluck S."/>
            <person name="Bruce D."/>
            <person name="Goodwin L."/>
            <person name="Saunders E."/>
            <person name="Brettin T."/>
            <person name="Detter J.C."/>
            <person name="Han C."/>
            <person name="Schmutz J."/>
            <person name="Larimer F."/>
            <person name="Land M."/>
            <person name="Hauser L."/>
            <person name="Kyrpides N."/>
            <person name="Kim E."/>
            <person name="Hemme C."/>
            <person name="Fields M.W."/>
            <person name="He Z."/>
            <person name="Zhou J."/>
            <person name="Richardson P."/>
        </authorList>
    </citation>
    <scope>NUCLEOTIDE SEQUENCE [LARGE SCALE GENOMIC DNA]</scope>
    <source>
        <strain>X514</strain>
    </source>
</reference>
<proteinExistence type="inferred from homology"/>
<organism>
    <name type="scientific">Thermoanaerobacter sp. (strain X514)</name>
    <dbReference type="NCBI Taxonomy" id="399726"/>
    <lineage>
        <taxon>Bacteria</taxon>
        <taxon>Bacillati</taxon>
        <taxon>Bacillota</taxon>
        <taxon>Clostridia</taxon>
        <taxon>Thermoanaerobacterales</taxon>
        <taxon>Thermoanaerobacteraceae</taxon>
        <taxon>Thermoanaerobacter</taxon>
    </lineage>
</organism>
<feature type="chain" id="PRO_1000121027" description="Large ribosomal subunit protein uL10">
    <location>
        <begin position="1"/>
        <end position="177"/>
    </location>
</feature>
<name>RL10_THEPX</name>
<dbReference type="EMBL" id="CP000923">
    <property type="protein sequence ID" value="ABY92159.1"/>
    <property type="molecule type" value="Genomic_DNA"/>
</dbReference>
<dbReference type="RefSeq" id="WP_003868697.1">
    <property type="nucleotide sequence ID" value="NC_010320.1"/>
</dbReference>
<dbReference type="SMR" id="B0K5G6"/>
<dbReference type="KEGG" id="tex:Teth514_0857"/>
<dbReference type="HOGENOM" id="CLU_092227_2_1_9"/>
<dbReference type="Proteomes" id="UP000002155">
    <property type="component" value="Chromosome"/>
</dbReference>
<dbReference type="GO" id="GO:0015934">
    <property type="term" value="C:large ribosomal subunit"/>
    <property type="evidence" value="ECO:0007669"/>
    <property type="project" value="InterPro"/>
</dbReference>
<dbReference type="GO" id="GO:0070180">
    <property type="term" value="F:large ribosomal subunit rRNA binding"/>
    <property type="evidence" value="ECO:0007669"/>
    <property type="project" value="UniProtKB-UniRule"/>
</dbReference>
<dbReference type="GO" id="GO:0003735">
    <property type="term" value="F:structural constituent of ribosome"/>
    <property type="evidence" value="ECO:0007669"/>
    <property type="project" value="InterPro"/>
</dbReference>
<dbReference type="GO" id="GO:0006412">
    <property type="term" value="P:translation"/>
    <property type="evidence" value="ECO:0007669"/>
    <property type="project" value="UniProtKB-UniRule"/>
</dbReference>
<dbReference type="CDD" id="cd05797">
    <property type="entry name" value="Ribosomal_L10"/>
    <property type="match status" value="1"/>
</dbReference>
<dbReference type="Gene3D" id="3.30.70.1730">
    <property type="match status" value="1"/>
</dbReference>
<dbReference type="Gene3D" id="6.10.250.290">
    <property type="match status" value="1"/>
</dbReference>
<dbReference type="HAMAP" id="MF_00362">
    <property type="entry name" value="Ribosomal_uL10"/>
    <property type="match status" value="1"/>
</dbReference>
<dbReference type="InterPro" id="IPR001790">
    <property type="entry name" value="Ribosomal_uL10"/>
</dbReference>
<dbReference type="InterPro" id="IPR043141">
    <property type="entry name" value="Ribosomal_uL10-like_sf"/>
</dbReference>
<dbReference type="InterPro" id="IPR022973">
    <property type="entry name" value="Ribosomal_uL10_bac"/>
</dbReference>
<dbReference type="InterPro" id="IPR047865">
    <property type="entry name" value="Ribosomal_uL10_bac_type"/>
</dbReference>
<dbReference type="InterPro" id="IPR002363">
    <property type="entry name" value="Ribosomal_uL10_CS_bac"/>
</dbReference>
<dbReference type="NCBIfam" id="NF000955">
    <property type="entry name" value="PRK00099.1-1"/>
    <property type="match status" value="1"/>
</dbReference>
<dbReference type="PANTHER" id="PTHR11560">
    <property type="entry name" value="39S RIBOSOMAL PROTEIN L10, MITOCHONDRIAL"/>
    <property type="match status" value="1"/>
</dbReference>
<dbReference type="Pfam" id="PF00466">
    <property type="entry name" value="Ribosomal_L10"/>
    <property type="match status" value="1"/>
</dbReference>
<dbReference type="SUPFAM" id="SSF160369">
    <property type="entry name" value="Ribosomal protein L10-like"/>
    <property type="match status" value="1"/>
</dbReference>
<dbReference type="PROSITE" id="PS01109">
    <property type="entry name" value="RIBOSOMAL_L10"/>
    <property type="match status" value="1"/>
</dbReference>